<name>MILT_ONCKE</name>
<proteinExistence type="evidence at protein level"/>
<dbReference type="EC" id="3.4.22.-"/>
<dbReference type="MEROPS" id="C01.093"/>
<dbReference type="GO" id="GO:0005576">
    <property type="term" value="C:extracellular region"/>
    <property type="evidence" value="ECO:0007669"/>
    <property type="project" value="UniProtKB-SubCell"/>
</dbReference>
<dbReference type="GO" id="GO:0016787">
    <property type="term" value="F:hydrolase activity"/>
    <property type="evidence" value="ECO:0007669"/>
    <property type="project" value="UniProtKB-KW"/>
</dbReference>
<comment type="function">
    <text>Cysteine proteinase that hydrolyzes basic proteins, such as histones, salmine and clupeine but not milk casein. Shows a preference for basic residues at P2 and P1 positions.</text>
</comment>
<comment type="subcellular location">
    <subcellularLocation>
        <location evidence="1">Secreted</location>
    </subcellularLocation>
</comment>
<comment type="tissue specificity">
    <text evidence="1">Found in milt (at protein level).</text>
</comment>
<reference key="1">
    <citation type="journal article" date="1997" name="Comp. Biochem. Physiol.">
        <title>Miltpain, new cysteine proteinase from the milt of chum salmon, Oncorhynchus keta.</title>
        <authorList>
            <person name="Kawabata C."/>
            <person name="Ichishima E."/>
        </authorList>
    </citation>
    <scope>PROTEIN SEQUENCE</scope>
    <scope>CHARACTERIZATION</scope>
    <scope>SUBCELLULAR LOCATION</scope>
    <scope>TISSUE SPECIFICITY</scope>
    <source>
        <tissue>Milt</tissue>
    </source>
</reference>
<feature type="chain" id="PRO_0000050601" description="Miltpain">
    <location>
        <begin position="1"/>
        <end position="15" status="greater than"/>
    </location>
</feature>
<feature type="non-terminal residue">
    <location>
        <position position="15"/>
    </location>
</feature>
<protein>
    <recommendedName>
        <fullName>Miltpain</fullName>
        <ecNumber>3.4.22.-</ecNumber>
    </recommendedName>
</protein>
<organism>
    <name type="scientific">Oncorhynchus keta</name>
    <name type="common">Chum salmon</name>
    <name type="synonym">Salmo keta</name>
    <dbReference type="NCBI Taxonomy" id="8018"/>
    <lineage>
        <taxon>Eukaryota</taxon>
        <taxon>Metazoa</taxon>
        <taxon>Chordata</taxon>
        <taxon>Craniata</taxon>
        <taxon>Vertebrata</taxon>
        <taxon>Euteleostomi</taxon>
        <taxon>Actinopterygii</taxon>
        <taxon>Neopterygii</taxon>
        <taxon>Teleostei</taxon>
        <taxon>Protacanthopterygii</taxon>
        <taxon>Salmoniformes</taxon>
        <taxon>Salmonidae</taxon>
        <taxon>Salmoninae</taxon>
        <taxon>Oncorhynchus</taxon>
    </lineage>
</organism>
<keyword id="KW-0903">Direct protein sequencing</keyword>
<keyword id="KW-0378">Hydrolase</keyword>
<keyword id="KW-0964">Secreted</keyword>
<accession>P81037</accession>
<sequence>LPSFLYAEMVGYNIL</sequence>
<evidence type="ECO:0000269" key="1">
    <source>
    </source>
</evidence>